<protein>
    <recommendedName>
        <fullName evidence="1">Small ribosomal subunit protein bS6</fullName>
    </recommendedName>
    <alternativeName>
        <fullName evidence="2">30S ribosomal protein S6</fullName>
    </alternativeName>
</protein>
<dbReference type="EMBL" id="CP000805">
    <property type="protein sequence ID" value="ACD70490.1"/>
    <property type="molecule type" value="Genomic_DNA"/>
</dbReference>
<dbReference type="RefSeq" id="WP_010881512.1">
    <property type="nucleotide sequence ID" value="NC_021508.1"/>
</dbReference>
<dbReference type="SMR" id="B2S211"/>
<dbReference type="GeneID" id="93875858"/>
<dbReference type="KEGG" id="tpp:TPASS_0063"/>
<dbReference type="PATRIC" id="fig|455434.6.peg.61"/>
<dbReference type="Proteomes" id="UP000001202">
    <property type="component" value="Chromosome"/>
</dbReference>
<dbReference type="GO" id="GO:0005737">
    <property type="term" value="C:cytoplasm"/>
    <property type="evidence" value="ECO:0007669"/>
    <property type="project" value="UniProtKB-ARBA"/>
</dbReference>
<dbReference type="GO" id="GO:1990904">
    <property type="term" value="C:ribonucleoprotein complex"/>
    <property type="evidence" value="ECO:0007669"/>
    <property type="project" value="UniProtKB-KW"/>
</dbReference>
<dbReference type="GO" id="GO:0005840">
    <property type="term" value="C:ribosome"/>
    <property type="evidence" value="ECO:0007669"/>
    <property type="project" value="UniProtKB-KW"/>
</dbReference>
<dbReference type="GO" id="GO:0070181">
    <property type="term" value="F:small ribosomal subunit rRNA binding"/>
    <property type="evidence" value="ECO:0007669"/>
    <property type="project" value="TreeGrafter"/>
</dbReference>
<dbReference type="GO" id="GO:0003735">
    <property type="term" value="F:structural constituent of ribosome"/>
    <property type="evidence" value="ECO:0007669"/>
    <property type="project" value="InterPro"/>
</dbReference>
<dbReference type="GO" id="GO:0006412">
    <property type="term" value="P:translation"/>
    <property type="evidence" value="ECO:0007669"/>
    <property type="project" value="UniProtKB-UniRule"/>
</dbReference>
<dbReference type="CDD" id="cd00473">
    <property type="entry name" value="bS6"/>
    <property type="match status" value="1"/>
</dbReference>
<dbReference type="Gene3D" id="3.30.70.60">
    <property type="match status" value="1"/>
</dbReference>
<dbReference type="HAMAP" id="MF_00360">
    <property type="entry name" value="Ribosomal_bS6"/>
    <property type="match status" value="1"/>
</dbReference>
<dbReference type="InterPro" id="IPR000529">
    <property type="entry name" value="Ribosomal_bS6"/>
</dbReference>
<dbReference type="InterPro" id="IPR035980">
    <property type="entry name" value="Ribosomal_bS6_sf"/>
</dbReference>
<dbReference type="InterPro" id="IPR020814">
    <property type="entry name" value="Ribosomal_S6_plastid/chlpt"/>
</dbReference>
<dbReference type="InterPro" id="IPR014717">
    <property type="entry name" value="Transl_elong_EF1B/ribsomal_bS6"/>
</dbReference>
<dbReference type="NCBIfam" id="TIGR00166">
    <property type="entry name" value="S6"/>
    <property type="match status" value="1"/>
</dbReference>
<dbReference type="PANTHER" id="PTHR21011">
    <property type="entry name" value="MITOCHONDRIAL 28S RIBOSOMAL PROTEIN S6"/>
    <property type="match status" value="1"/>
</dbReference>
<dbReference type="PANTHER" id="PTHR21011:SF1">
    <property type="entry name" value="SMALL RIBOSOMAL SUBUNIT PROTEIN BS6M"/>
    <property type="match status" value="1"/>
</dbReference>
<dbReference type="Pfam" id="PF01250">
    <property type="entry name" value="Ribosomal_S6"/>
    <property type="match status" value="1"/>
</dbReference>
<dbReference type="SUPFAM" id="SSF54995">
    <property type="entry name" value="Ribosomal protein S6"/>
    <property type="match status" value="1"/>
</dbReference>
<accession>B2S211</accession>
<keyword id="KW-0687">Ribonucleoprotein</keyword>
<keyword id="KW-0689">Ribosomal protein</keyword>
<keyword id="KW-0694">RNA-binding</keyword>
<keyword id="KW-0699">rRNA-binding</keyword>
<reference key="1">
    <citation type="journal article" date="2008" name="BMC Microbiol.">
        <title>Complete genome sequence of Treponema pallidum ssp. pallidum strain SS14 determined with oligonucleotide arrays.</title>
        <authorList>
            <person name="Matejkova P."/>
            <person name="Strouhal M."/>
            <person name="Smajs D."/>
            <person name="Norris S.J."/>
            <person name="Palzkill T."/>
            <person name="Petrosino J.F."/>
            <person name="Sodergren E."/>
            <person name="Norton J.E."/>
            <person name="Singh J."/>
            <person name="Richmond T.A."/>
            <person name="Molla M.N."/>
            <person name="Albert T.J."/>
            <person name="Weinstock G.M."/>
        </authorList>
    </citation>
    <scope>NUCLEOTIDE SEQUENCE [LARGE SCALE GENOMIC DNA]</scope>
    <source>
        <strain>SS14</strain>
    </source>
</reference>
<evidence type="ECO:0000255" key="1">
    <source>
        <dbReference type="HAMAP-Rule" id="MF_00360"/>
    </source>
</evidence>
<evidence type="ECO:0000305" key="2"/>
<feature type="chain" id="PRO_1000120819" description="Small ribosomal subunit protein bS6">
    <location>
        <begin position="1"/>
        <end position="93"/>
    </location>
</feature>
<organism>
    <name type="scientific">Treponema pallidum subsp. pallidum (strain SS14)</name>
    <dbReference type="NCBI Taxonomy" id="455434"/>
    <lineage>
        <taxon>Bacteria</taxon>
        <taxon>Pseudomonadati</taxon>
        <taxon>Spirochaetota</taxon>
        <taxon>Spirochaetia</taxon>
        <taxon>Spirochaetales</taxon>
        <taxon>Treponemataceae</taxon>
        <taxon>Treponema</taxon>
    </lineage>
</organism>
<name>RS6_TREPS</name>
<comment type="function">
    <text evidence="1">Binds together with bS18 to 16S ribosomal RNA.</text>
</comment>
<comment type="similarity">
    <text evidence="1">Belongs to the bacterial ribosomal protein bS6 family.</text>
</comment>
<proteinExistence type="inferred from homology"/>
<sequence length="93" mass="10916">MRTYELMAVFSAHEDLFLQGSTAVRALLQENDAVIAREDHIGERELAYPLKKQKRGRYLLFIVQCEPGKVRELDHKLRLRHDLLTHLFVRVDS</sequence>
<gene>
    <name evidence="1" type="primary">rpsF</name>
    <name type="ordered locus">TPASS_0063</name>
</gene>